<evidence type="ECO:0000255" key="1">
    <source>
        <dbReference type="HAMAP-Rule" id="MF_01813"/>
    </source>
</evidence>
<reference key="1">
    <citation type="submission" date="2007-07" db="EMBL/GenBank/DDBJ databases">
        <title>Complete sequence of chromosome of Shewanella baltica OS185.</title>
        <authorList>
            <consortium name="US DOE Joint Genome Institute"/>
            <person name="Copeland A."/>
            <person name="Lucas S."/>
            <person name="Lapidus A."/>
            <person name="Barry K."/>
            <person name="Glavina del Rio T."/>
            <person name="Dalin E."/>
            <person name="Tice H."/>
            <person name="Pitluck S."/>
            <person name="Sims D."/>
            <person name="Brettin T."/>
            <person name="Bruce D."/>
            <person name="Detter J.C."/>
            <person name="Han C."/>
            <person name="Schmutz J."/>
            <person name="Larimer F."/>
            <person name="Land M."/>
            <person name="Hauser L."/>
            <person name="Kyrpides N."/>
            <person name="Mikhailova N."/>
            <person name="Brettar I."/>
            <person name="Rodrigues J."/>
            <person name="Konstantinidis K."/>
            <person name="Tiedje J."/>
            <person name="Richardson P."/>
        </authorList>
    </citation>
    <scope>NUCLEOTIDE SEQUENCE [LARGE SCALE GENOMIC DNA]</scope>
    <source>
        <strain>OS185</strain>
    </source>
</reference>
<gene>
    <name evidence="1" type="primary">ubiE</name>
    <name type="ordered locus">Shew185_0419</name>
</gene>
<protein>
    <recommendedName>
        <fullName evidence="1">Ubiquinone/menaquinone biosynthesis C-methyltransferase UbiE</fullName>
        <ecNumber evidence="1">2.1.1.163</ecNumber>
        <ecNumber evidence="1">2.1.1.201</ecNumber>
    </recommendedName>
    <alternativeName>
        <fullName evidence="1">2-methoxy-6-polyprenyl-1,4-benzoquinol methylase</fullName>
    </alternativeName>
    <alternativeName>
        <fullName evidence="1">Demethylmenaquinone methyltransferase</fullName>
    </alternativeName>
</protein>
<comment type="function">
    <text evidence="1">Methyltransferase required for the conversion of demethylmenaquinol (DMKH2) to menaquinol (MKH2) and the conversion of 2-polyprenyl-6-methoxy-1,4-benzoquinol (DDMQH2) to 2-polyprenyl-3-methyl-6-methoxy-1,4-benzoquinol (DMQH2).</text>
</comment>
<comment type="catalytic activity">
    <reaction evidence="1">
        <text>a 2-demethylmenaquinol + S-adenosyl-L-methionine = a menaquinol + S-adenosyl-L-homocysteine + H(+)</text>
        <dbReference type="Rhea" id="RHEA:42640"/>
        <dbReference type="Rhea" id="RHEA-COMP:9539"/>
        <dbReference type="Rhea" id="RHEA-COMP:9563"/>
        <dbReference type="ChEBI" id="CHEBI:15378"/>
        <dbReference type="ChEBI" id="CHEBI:18151"/>
        <dbReference type="ChEBI" id="CHEBI:55437"/>
        <dbReference type="ChEBI" id="CHEBI:57856"/>
        <dbReference type="ChEBI" id="CHEBI:59789"/>
        <dbReference type="EC" id="2.1.1.163"/>
    </reaction>
</comment>
<comment type="catalytic activity">
    <reaction evidence="1">
        <text>a 2-methoxy-6-(all-trans-polyprenyl)benzene-1,4-diol + S-adenosyl-L-methionine = a 5-methoxy-2-methyl-3-(all-trans-polyprenyl)benzene-1,4-diol + S-adenosyl-L-homocysteine + H(+)</text>
        <dbReference type="Rhea" id="RHEA:28286"/>
        <dbReference type="Rhea" id="RHEA-COMP:10858"/>
        <dbReference type="Rhea" id="RHEA-COMP:10859"/>
        <dbReference type="ChEBI" id="CHEBI:15378"/>
        <dbReference type="ChEBI" id="CHEBI:57856"/>
        <dbReference type="ChEBI" id="CHEBI:59789"/>
        <dbReference type="ChEBI" id="CHEBI:84166"/>
        <dbReference type="ChEBI" id="CHEBI:84167"/>
        <dbReference type="EC" id="2.1.1.201"/>
    </reaction>
</comment>
<comment type="pathway">
    <text evidence="1">Quinol/quinone metabolism; menaquinone biosynthesis; menaquinol from 1,4-dihydroxy-2-naphthoate: step 2/2.</text>
</comment>
<comment type="pathway">
    <text evidence="1">Cofactor biosynthesis; ubiquinone biosynthesis.</text>
</comment>
<comment type="similarity">
    <text evidence="1">Belongs to the class I-like SAM-binding methyltransferase superfamily. MenG/UbiE family.</text>
</comment>
<accession>A6WIE9</accession>
<feature type="chain" id="PRO_1000056294" description="Ubiquinone/menaquinone biosynthesis C-methyltransferase UbiE">
    <location>
        <begin position="1"/>
        <end position="251"/>
    </location>
</feature>
<feature type="binding site" evidence="1">
    <location>
        <position position="74"/>
    </location>
    <ligand>
        <name>S-adenosyl-L-methionine</name>
        <dbReference type="ChEBI" id="CHEBI:59789"/>
    </ligand>
</feature>
<feature type="binding site" evidence="1">
    <location>
        <position position="95"/>
    </location>
    <ligand>
        <name>S-adenosyl-L-methionine</name>
        <dbReference type="ChEBI" id="CHEBI:59789"/>
    </ligand>
</feature>
<feature type="binding site" evidence="1">
    <location>
        <begin position="123"/>
        <end position="124"/>
    </location>
    <ligand>
        <name>S-adenosyl-L-methionine</name>
        <dbReference type="ChEBI" id="CHEBI:59789"/>
    </ligand>
</feature>
<proteinExistence type="inferred from homology"/>
<name>UBIE_SHEB8</name>
<organism>
    <name type="scientific">Shewanella baltica (strain OS185)</name>
    <dbReference type="NCBI Taxonomy" id="402882"/>
    <lineage>
        <taxon>Bacteria</taxon>
        <taxon>Pseudomonadati</taxon>
        <taxon>Pseudomonadota</taxon>
        <taxon>Gammaproteobacteria</taxon>
        <taxon>Alteromonadales</taxon>
        <taxon>Shewanellaceae</taxon>
        <taxon>Shewanella</taxon>
    </lineage>
</organism>
<dbReference type="EC" id="2.1.1.163" evidence="1"/>
<dbReference type="EC" id="2.1.1.201" evidence="1"/>
<dbReference type="EMBL" id="CP000753">
    <property type="protein sequence ID" value="ABS06588.1"/>
    <property type="molecule type" value="Genomic_DNA"/>
</dbReference>
<dbReference type="RefSeq" id="WP_006083326.1">
    <property type="nucleotide sequence ID" value="NC_009665.1"/>
</dbReference>
<dbReference type="SMR" id="A6WIE9"/>
<dbReference type="GeneID" id="11774543"/>
<dbReference type="KEGG" id="sbm:Shew185_0419"/>
<dbReference type="HOGENOM" id="CLU_037990_0_0_6"/>
<dbReference type="UniPathway" id="UPA00079">
    <property type="reaction ID" value="UER00169"/>
</dbReference>
<dbReference type="UniPathway" id="UPA00232"/>
<dbReference type="GO" id="GO:0008425">
    <property type="term" value="F:2-methoxy-6-polyprenyl-1,4-benzoquinol methyltransferase activity"/>
    <property type="evidence" value="ECO:0007669"/>
    <property type="project" value="UniProtKB-UniRule"/>
</dbReference>
<dbReference type="GO" id="GO:0043770">
    <property type="term" value="F:demethylmenaquinone methyltransferase activity"/>
    <property type="evidence" value="ECO:0007669"/>
    <property type="project" value="UniProtKB-UniRule"/>
</dbReference>
<dbReference type="GO" id="GO:0009060">
    <property type="term" value="P:aerobic respiration"/>
    <property type="evidence" value="ECO:0007669"/>
    <property type="project" value="UniProtKB-UniRule"/>
</dbReference>
<dbReference type="GO" id="GO:0009234">
    <property type="term" value="P:menaquinone biosynthetic process"/>
    <property type="evidence" value="ECO:0007669"/>
    <property type="project" value="UniProtKB-UniRule"/>
</dbReference>
<dbReference type="GO" id="GO:0032259">
    <property type="term" value="P:methylation"/>
    <property type="evidence" value="ECO:0007669"/>
    <property type="project" value="UniProtKB-KW"/>
</dbReference>
<dbReference type="CDD" id="cd02440">
    <property type="entry name" value="AdoMet_MTases"/>
    <property type="match status" value="1"/>
</dbReference>
<dbReference type="FunFam" id="3.40.50.150:FF:000014">
    <property type="entry name" value="Ubiquinone/menaquinone biosynthesis C-methyltransferase UbiE"/>
    <property type="match status" value="1"/>
</dbReference>
<dbReference type="Gene3D" id="3.40.50.150">
    <property type="entry name" value="Vaccinia Virus protein VP39"/>
    <property type="match status" value="1"/>
</dbReference>
<dbReference type="HAMAP" id="MF_01813">
    <property type="entry name" value="MenG_UbiE_methyltr"/>
    <property type="match status" value="1"/>
</dbReference>
<dbReference type="InterPro" id="IPR029063">
    <property type="entry name" value="SAM-dependent_MTases_sf"/>
</dbReference>
<dbReference type="InterPro" id="IPR004033">
    <property type="entry name" value="UbiE/COQ5_MeTrFase"/>
</dbReference>
<dbReference type="InterPro" id="IPR023576">
    <property type="entry name" value="UbiE/COQ5_MeTrFase_CS"/>
</dbReference>
<dbReference type="NCBIfam" id="TIGR01934">
    <property type="entry name" value="MenG_MenH_UbiE"/>
    <property type="match status" value="1"/>
</dbReference>
<dbReference type="NCBIfam" id="NF001240">
    <property type="entry name" value="PRK00216.1-1"/>
    <property type="match status" value="1"/>
</dbReference>
<dbReference type="NCBIfam" id="NF001242">
    <property type="entry name" value="PRK00216.1-3"/>
    <property type="match status" value="1"/>
</dbReference>
<dbReference type="NCBIfam" id="NF001244">
    <property type="entry name" value="PRK00216.1-5"/>
    <property type="match status" value="1"/>
</dbReference>
<dbReference type="PANTHER" id="PTHR43591:SF24">
    <property type="entry name" value="2-METHOXY-6-POLYPRENYL-1,4-BENZOQUINOL METHYLASE, MITOCHONDRIAL"/>
    <property type="match status" value="1"/>
</dbReference>
<dbReference type="PANTHER" id="PTHR43591">
    <property type="entry name" value="METHYLTRANSFERASE"/>
    <property type="match status" value="1"/>
</dbReference>
<dbReference type="Pfam" id="PF01209">
    <property type="entry name" value="Ubie_methyltran"/>
    <property type="match status" value="1"/>
</dbReference>
<dbReference type="SUPFAM" id="SSF53335">
    <property type="entry name" value="S-adenosyl-L-methionine-dependent methyltransferases"/>
    <property type="match status" value="1"/>
</dbReference>
<dbReference type="PROSITE" id="PS51608">
    <property type="entry name" value="SAM_MT_UBIE"/>
    <property type="match status" value="1"/>
</dbReference>
<dbReference type="PROSITE" id="PS01183">
    <property type="entry name" value="UBIE_1"/>
    <property type="match status" value="1"/>
</dbReference>
<dbReference type="PROSITE" id="PS01184">
    <property type="entry name" value="UBIE_2"/>
    <property type="match status" value="1"/>
</dbReference>
<sequence length="251" mass="28093">MSEGESKSTHFGYKTVEADKKAELVAGVFHSVAAKYDIMNDVMSFGIHRFWKRYTIEVSGARPGMKVLDLAGGTGDLTAKFSHLVGDKGEVVLADINDSMLKVGRTKLRDKGIVNNVSYVQANAEALPFPDNHFDIITIAFGLRNVTDKDAALRSMNRVLKPGGKLLVLEFSKPQHEIMRKVYDLYSFKVLPKMGELITKDADSYEYLAESIRMHPDQDTLKQMMVDAGFEQVDYTNMTDGIVALHRGYKF</sequence>
<keyword id="KW-0474">Menaquinone biosynthesis</keyword>
<keyword id="KW-0489">Methyltransferase</keyword>
<keyword id="KW-0949">S-adenosyl-L-methionine</keyword>
<keyword id="KW-0808">Transferase</keyword>
<keyword id="KW-0831">Ubiquinone biosynthesis</keyword>